<sequence>MEKLFVPSFPKTFLNYQTPAKVENSPELHPKSRKKNLSFTKKKEPNIIPDEQFDYLCRNGSLLEAEKALDSLFQQGSKVKRSTYLKLLESCIDSGSIHLGRILHARFGLFTEPDVFVETKLLSMYAKCGCIADARKVFDSMRERNLFTWSAMIGAYSRENRWREVAKLFRLMMKDGVLPDDFLFPKILQGCANCGDVEAGKVIHSVVIKLGMSSCLRVSNSILAVYAKCGELDFATKFFRRMRERDVIAWNSVLLAYCQNGKHEEAVELVKEMEKEGISPGLVTWNILIGGYNQLGKCDAAMDLMQKMETFGITADVFTWTAMISGLIHNGMRYQALDMFRKMFLAGVVPNAVTIMSAVSACSCLKVINQGSEVHSIAVKMGFIDDVLVGNSLVDMYSKCGKLEDARKVFDSVKNKDVYTWNSMITGYCQAGYCGKAYELFTRMQDANLRPNIITWNTMISGYIKNGDEGEAMDLFQRMEKDGKVQRNTATWNLIIAGYIQNGKKDEALELFRKMQFSRFMPNSVTILSLLPACANLLGAKMVREIHGCVLRRNLDAIHAVKNALTDTYAKSGDIEYSRTIFLGMETKDIITWNSLIGGYVLHGSYGPALALFNQMKTQGITPNRGTLSSIILAHGLMGNVDEGKKVFYSIANDYHIIPALEHCSAMVYLYGRANRLEEALQFIQEMNIQSETPIWESFLTGCRIHGDIDMAIHAAENLFSLEPENTATESIVSQIYALGAKLGRSLEGNKPRRDNLLKKPLGQSWIEVRNLIHTFTTGDQSKLCTDVLYPLVEKMSRLDNRSDQYNGELWIEEEGREETCGIHSEKFAMAFGLISSSGASKTTIRILKNLRMCRDCHDTAKYVSKRYGCDILLEDTRCLHHFKNGDCSCKDYW</sequence>
<name>PPR52_ARATH</name>
<dbReference type="EMBL" id="AC007797">
    <property type="protein sequence ID" value="AAG12555.1"/>
    <property type="molecule type" value="Genomic_DNA"/>
</dbReference>
<dbReference type="EMBL" id="AC024609">
    <property type="status" value="NOT_ANNOTATED_CDS"/>
    <property type="molecule type" value="Genomic_DNA"/>
</dbReference>
<dbReference type="EMBL" id="CP002684">
    <property type="protein sequence ID" value="AEE29891.1"/>
    <property type="molecule type" value="Genomic_DNA"/>
</dbReference>
<dbReference type="EMBL" id="AK229137">
    <property type="protein sequence ID" value="BAF01011.1"/>
    <property type="status" value="ALT_INIT"/>
    <property type="molecule type" value="mRNA"/>
</dbReference>
<dbReference type="EMBL" id="AJ006040">
    <property type="protein sequence ID" value="CAA06829.1"/>
    <property type="molecule type" value="mRNA"/>
</dbReference>
<dbReference type="PIR" id="C86330">
    <property type="entry name" value="C86330"/>
</dbReference>
<dbReference type="PIR" id="T52647">
    <property type="entry name" value="T52647"/>
</dbReference>
<dbReference type="RefSeq" id="NP_173402.2">
    <property type="nucleotide sequence ID" value="NM_101828.2"/>
</dbReference>
<dbReference type="SMR" id="Q9FXH1"/>
<dbReference type="FunCoup" id="Q9FXH1">
    <property type="interactions" value="1385"/>
</dbReference>
<dbReference type="STRING" id="3702.Q9FXH1"/>
<dbReference type="PaxDb" id="3702-AT1G19720.1"/>
<dbReference type="ProteomicsDB" id="226313"/>
<dbReference type="EnsemblPlants" id="AT1G19720.1">
    <property type="protein sequence ID" value="AT1G19720.1"/>
    <property type="gene ID" value="AT1G19720"/>
</dbReference>
<dbReference type="GeneID" id="838561"/>
<dbReference type="Gramene" id="AT1G19720.1">
    <property type="protein sequence ID" value="AT1G19720.1"/>
    <property type="gene ID" value="AT1G19720"/>
</dbReference>
<dbReference type="KEGG" id="ath:AT1G19720"/>
<dbReference type="Araport" id="AT1G19720"/>
<dbReference type="TAIR" id="AT1G19720"/>
<dbReference type="eggNOG" id="KOG4197">
    <property type="taxonomic scope" value="Eukaryota"/>
</dbReference>
<dbReference type="HOGENOM" id="CLU_002706_15_1_1"/>
<dbReference type="InParanoid" id="Q9FXH1"/>
<dbReference type="OMA" id="RCLHHFK"/>
<dbReference type="PhylomeDB" id="Q9FXH1"/>
<dbReference type="PRO" id="PR:Q9FXH1"/>
<dbReference type="Proteomes" id="UP000006548">
    <property type="component" value="Chromosome 1"/>
</dbReference>
<dbReference type="ExpressionAtlas" id="Q9FXH1">
    <property type="expression patterns" value="baseline and differential"/>
</dbReference>
<dbReference type="GO" id="GO:0009507">
    <property type="term" value="C:chloroplast"/>
    <property type="evidence" value="ECO:0007005"/>
    <property type="project" value="TAIR"/>
</dbReference>
<dbReference type="GO" id="GO:0005737">
    <property type="term" value="C:cytoplasm"/>
    <property type="evidence" value="ECO:0007005"/>
    <property type="project" value="TAIR"/>
</dbReference>
<dbReference type="GO" id="GO:0005634">
    <property type="term" value="C:nucleus"/>
    <property type="evidence" value="ECO:0007005"/>
    <property type="project" value="TAIR"/>
</dbReference>
<dbReference type="GO" id="GO:0003729">
    <property type="term" value="F:mRNA binding"/>
    <property type="evidence" value="ECO:0000314"/>
    <property type="project" value="TAIR"/>
</dbReference>
<dbReference type="GO" id="GO:0008270">
    <property type="term" value="F:zinc ion binding"/>
    <property type="evidence" value="ECO:0007669"/>
    <property type="project" value="InterPro"/>
</dbReference>
<dbReference type="GO" id="GO:0009451">
    <property type="term" value="P:RNA modification"/>
    <property type="evidence" value="ECO:0007669"/>
    <property type="project" value="InterPro"/>
</dbReference>
<dbReference type="FunFam" id="1.25.40.10:FF:001800">
    <property type="entry name" value="Pentatricopeptide repeat-containing protein"/>
    <property type="match status" value="1"/>
</dbReference>
<dbReference type="FunFam" id="1.25.40.10:FF:001175">
    <property type="entry name" value="Pentatricopeptide repeat-containing protein At1g19720"/>
    <property type="match status" value="1"/>
</dbReference>
<dbReference type="FunFam" id="1.25.40.10:FF:002570">
    <property type="entry name" value="Pentatricopeptide repeat-containing protein At1g19720"/>
    <property type="match status" value="1"/>
</dbReference>
<dbReference type="FunFam" id="1.25.40.10:FF:000380">
    <property type="entry name" value="Pentatricopeptide repeat-containing protein, chloroplastic"/>
    <property type="match status" value="1"/>
</dbReference>
<dbReference type="Gene3D" id="1.25.40.10">
    <property type="entry name" value="Tetratricopeptide repeat domain"/>
    <property type="match status" value="5"/>
</dbReference>
<dbReference type="InterPro" id="IPR032867">
    <property type="entry name" value="DYW_dom"/>
</dbReference>
<dbReference type="InterPro" id="IPR002885">
    <property type="entry name" value="Pentatricopeptide_rpt"/>
</dbReference>
<dbReference type="InterPro" id="IPR046960">
    <property type="entry name" value="PPR_At4g14850-like_plant"/>
</dbReference>
<dbReference type="InterPro" id="IPR011990">
    <property type="entry name" value="TPR-like_helical_dom_sf"/>
</dbReference>
<dbReference type="NCBIfam" id="TIGR00756">
    <property type="entry name" value="PPR"/>
    <property type="match status" value="9"/>
</dbReference>
<dbReference type="PANTHER" id="PTHR47926:SF369">
    <property type="entry name" value="DYW DOMAIN-CONTAINING PROTEIN"/>
    <property type="match status" value="1"/>
</dbReference>
<dbReference type="PANTHER" id="PTHR47926">
    <property type="entry name" value="PENTATRICOPEPTIDE REPEAT-CONTAINING PROTEIN"/>
    <property type="match status" value="1"/>
</dbReference>
<dbReference type="Pfam" id="PF14432">
    <property type="entry name" value="DYW_deaminase"/>
    <property type="match status" value="1"/>
</dbReference>
<dbReference type="Pfam" id="PF01535">
    <property type="entry name" value="PPR"/>
    <property type="match status" value="3"/>
</dbReference>
<dbReference type="Pfam" id="PF13041">
    <property type="entry name" value="PPR_2"/>
    <property type="match status" value="5"/>
</dbReference>
<dbReference type="SUPFAM" id="SSF81901">
    <property type="entry name" value="HCP-like"/>
    <property type="match status" value="1"/>
</dbReference>
<dbReference type="PROSITE" id="PS51375">
    <property type="entry name" value="PPR"/>
    <property type="match status" value="14"/>
</dbReference>
<accession>Q9FXH1</accession>
<accession>Q0WPD8</accession>
<accession>Q9M4P6</accession>
<organism>
    <name type="scientific">Arabidopsis thaliana</name>
    <name type="common">Mouse-ear cress</name>
    <dbReference type="NCBI Taxonomy" id="3702"/>
    <lineage>
        <taxon>Eukaryota</taxon>
        <taxon>Viridiplantae</taxon>
        <taxon>Streptophyta</taxon>
        <taxon>Embryophyta</taxon>
        <taxon>Tracheophyta</taxon>
        <taxon>Spermatophyta</taxon>
        <taxon>Magnoliopsida</taxon>
        <taxon>eudicotyledons</taxon>
        <taxon>Gunneridae</taxon>
        <taxon>Pentapetalae</taxon>
        <taxon>rosids</taxon>
        <taxon>malvids</taxon>
        <taxon>Brassicales</taxon>
        <taxon>Brassicaceae</taxon>
        <taxon>Camelineae</taxon>
        <taxon>Arabidopsis</taxon>
    </lineage>
</organism>
<evidence type="ECO:0000305" key="1"/>
<protein>
    <recommendedName>
        <fullName>Pentatricopeptide repeat-containing protein At1g19720</fullName>
    </recommendedName>
    <alternativeName>
        <fullName>Protein DYW7</fullName>
    </alternativeName>
</protein>
<gene>
    <name type="primary">DYW7</name>
    <name type="synonym">PCMP-H7</name>
    <name type="ordered locus">At1g19720</name>
    <name type="ORF">F14P1.33</name>
    <name type="ORF">F6F9.22</name>
</gene>
<reference key="1">
    <citation type="journal article" date="2000" name="Nature">
        <title>Sequence and analysis of chromosome 1 of the plant Arabidopsis thaliana.</title>
        <authorList>
            <person name="Theologis A."/>
            <person name="Ecker J.R."/>
            <person name="Palm C.J."/>
            <person name="Federspiel N.A."/>
            <person name="Kaul S."/>
            <person name="White O."/>
            <person name="Alonso J."/>
            <person name="Altafi H."/>
            <person name="Araujo R."/>
            <person name="Bowman C.L."/>
            <person name="Brooks S.Y."/>
            <person name="Buehler E."/>
            <person name="Chan A."/>
            <person name="Chao Q."/>
            <person name="Chen H."/>
            <person name="Cheuk R.F."/>
            <person name="Chin C.W."/>
            <person name="Chung M.K."/>
            <person name="Conn L."/>
            <person name="Conway A.B."/>
            <person name="Conway A.R."/>
            <person name="Creasy T.H."/>
            <person name="Dewar K."/>
            <person name="Dunn P."/>
            <person name="Etgu P."/>
            <person name="Feldblyum T.V."/>
            <person name="Feng J.-D."/>
            <person name="Fong B."/>
            <person name="Fujii C.Y."/>
            <person name="Gill J.E."/>
            <person name="Goldsmith A.D."/>
            <person name="Haas B."/>
            <person name="Hansen N.F."/>
            <person name="Hughes B."/>
            <person name="Huizar L."/>
            <person name="Hunter J.L."/>
            <person name="Jenkins J."/>
            <person name="Johnson-Hopson C."/>
            <person name="Khan S."/>
            <person name="Khaykin E."/>
            <person name="Kim C.J."/>
            <person name="Koo H.L."/>
            <person name="Kremenetskaia I."/>
            <person name="Kurtz D.B."/>
            <person name="Kwan A."/>
            <person name="Lam B."/>
            <person name="Langin-Hooper S."/>
            <person name="Lee A."/>
            <person name="Lee J.M."/>
            <person name="Lenz C.A."/>
            <person name="Li J.H."/>
            <person name="Li Y.-P."/>
            <person name="Lin X."/>
            <person name="Liu S.X."/>
            <person name="Liu Z.A."/>
            <person name="Luros J.S."/>
            <person name="Maiti R."/>
            <person name="Marziali A."/>
            <person name="Militscher J."/>
            <person name="Miranda M."/>
            <person name="Nguyen M."/>
            <person name="Nierman W.C."/>
            <person name="Osborne B.I."/>
            <person name="Pai G."/>
            <person name="Peterson J."/>
            <person name="Pham P.K."/>
            <person name="Rizzo M."/>
            <person name="Rooney T."/>
            <person name="Rowley D."/>
            <person name="Sakano H."/>
            <person name="Salzberg S.L."/>
            <person name="Schwartz J.R."/>
            <person name="Shinn P."/>
            <person name="Southwick A.M."/>
            <person name="Sun H."/>
            <person name="Tallon L.J."/>
            <person name="Tambunga G."/>
            <person name="Toriumi M.J."/>
            <person name="Town C.D."/>
            <person name="Utterback T."/>
            <person name="Van Aken S."/>
            <person name="Vaysberg M."/>
            <person name="Vysotskaia V.S."/>
            <person name="Walker M."/>
            <person name="Wu D."/>
            <person name="Yu G."/>
            <person name="Fraser C.M."/>
            <person name="Venter J.C."/>
            <person name="Davis R.W."/>
        </authorList>
    </citation>
    <scope>NUCLEOTIDE SEQUENCE [LARGE SCALE GENOMIC DNA]</scope>
    <source>
        <strain>cv. Columbia</strain>
    </source>
</reference>
<reference key="2">
    <citation type="journal article" date="2017" name="Plant J.">
        <title>Araport11: a complete reannotation of the Arabidopsis thaliana reference genome.</title>
        <authorList>
            <person name="Cheng C.Y."/>
            <person name="Krishnakumar V."/>
            <person name="Chan A.P."/>
            <person name="Thibaud-Nissen F."/>
            <person name="Schobel S."/>
            <person name="Town C.D."/>
        </authorList>
    </citation>
    <scope>GENOME REANNOTATION</scope>
    <source>
        <strain>cv. Columbia</strain>
    </source>
</reference>
<reference key="3">
    <citation type="submission" date="2006-07" db="EMBL/GenBank/DDBJ databases">
        <title>Large-scale analysis of RIKEN Arabidopsis full-length (RAFL) cDNAs.</title>
        <authorList>
            <person name="Totoki Y."/>
            <person name="Seki M."/>
            <person name="Ishida J."/>
            <person name="Nakajima M."/>
            <person name="Enju A."/>
            <person name="Kamiya A."/>
            <person name="Narusaka M."/>
            <person name="Shin-i T."/>
            <person name="Nakagawa M."/>
            <person name="Sakamoto N."/>
            <person name="Oishi K."/>
            <person name="Kohara Y."/>
            <person name="Kobayashi M."/>
            <person name="Toyoda A."/>
            <person name="Sakaki Y."/>
            <person name="Sakurai T."/>
            <person name="Iida K."/>
            <person name="Akiyama K."/>
            <person name="Satou M."/>
            <person name="Toyoda T."/>
            <person name="Konagaya A."/>
            <person name="Carninci P."/>
            <person name="Kawai J."/>
            <person name="Hayashizaki Y."/>
            <person name="Shinozaki K."/>
        </authorList>
    </citation>
    <scope>NUCLEOTIDE SEQUENCE [LARGE SCALE MRNA] OF 159-500</scope>
    <source>
        <strain>cv. Columbia</strain>
    </source>
</reference>
<reference key="4">
    <citation type="journal article" date="2000" name="Plant Mol. Biol.">
        <title>In Arabidopsis thaliana, 1% of the genome codes for a novel protein family unique to plants.</title>
        <authorList>
            <person name="Aubourg S."/>
            <person name="Boudet N."/>
            <person name="Kreis M."/>
            <person name="Lecharny A."/>
        </authorList>
    </citation>
    <scope>NUCLEOTIDE SEQUENCE [MRNA] OF 489-894</scope>
    <scope>GENE FAMILY</scope>
</reference>
<reference key="5">
    <citation type="journal article" date="2004" name="Plant Cell">
        <title>Genome-wide analysis of Arabidopsis pentatricopeptide repeat proteins reveals their essential role in organelle biogenesis.</title>
        <authorList>
            <person name="Lurin C."/>
            <person name="Andres C."/>
            <person name="Aubourg S."/>
            <person name="Bellaoui M."/>
            <person name="Bitton F."/>
            <person name="Bruyere C."/>
            <person name="Caboche M."/>
            <person name="Debast C."/>
            <person name="Gualberto J."/>
            <person name="Hoffmann B."/>
            <person name="Lecharny A."/>
            <person name="Le Ret M."/>
            <person name="Martin-Magniette M.-L."/>
            <person name="Mireau H."/>
            <person name="Peeters N."/>
            <person name="Renou J.-P."/>
            <person name="Szurek B."/>
            <person name="Taconnat L."/>
            <person name="Small I."/>
        </authorList>
    </citation>
    <scope>GENE FAMILY</scope>
</reference>
<comment type="similarity">
    <text evidence="1">Belongs to the PPR family. PCMP-H subfamily.</text>
</comment>
<comment type="sequence caution" evidence="1">
    <conflict type="erroneous initiation">
        <sequence resource="EMBL-CDS" id="BAF01011"/>
    </conflict>
</comment>
<comment type="online information" name="Pentatricopeptide repeat proteins">
    <link uri="https://ppr.plantenergy.uwa.edu.au"/>
</comment>
<keyword id="KW-1185">Reference proteome</keyword>
<keyword id="KW-0677">Repeat</keyword>
<feature type="chain" id="PRO_0000342793" description="Pentatricopeptide repeat-containing protein At1g19720">
    <location>
        <begin position="1"/>
        <end position="894"/>
    </location>
</feature>
<feature type="repeat" description="PPR 1">
    <location>
        <begin position="80"/>
        <end position="110"/>
    </location>
</feature>
<feature type="repeat" description="PPR 2">
    <location>
        <begin position="114"/>
        <end position="144"/>
    </location>
</feature>
<feature type="repeat" description="PPR 3">
    <location>
        <begin position="145"/>
        <end position="179"/>
    </location>
</feature>
<feature type="repeat" description="PPR 4">
    <location>
        <begin position="180"/>
        <end position="214"/>
    </location>
</feature>
<feature type="repeat" description="PPR 5">
    <location>
        <begin position="215"/>
        <end position="245"/>
    </location>
</feature>
<feature type="repeat" description="PPR 6">
    <location>
        <begin position="246"/>
        <end position="280"/>
    </location>
</feature>
<feature type="repeat" description="PPR 7">
    <location>
        <begin position="281"/>
        <end position="315"/>
    </location>
</feature>
<feature type="repeat" description="PPR 8">
    <location>
        <begin position="316"/>
        <end position="350"/>
    </location>
</feature>
<feature type="repeat" description="PPR 9">
    <location>
        <begin position="351"/>
        <end position="385"/>
    </location>
</feature>
<feature type="repeat" description="PPR 10">
    <location>
        <begin position="386"/>
        <end position="416"/>
    </location>
</feature>
<feature type="repeat" description="PPR 11">
    <location>
        <begin position="417"/>
        <end position="451"/>
    </location>
</feature>
<feature type="repeat" description="PPR 12">
    <location>
        <begin position="452"/>
        <end position="486"/>
    </location>
</feature>
<feature type="repeat" description="PPR 13">
    <location>
        <begin position="488"/>
        <end position="522"/>
    </location>
</feature>
<feature type="repeat" description="PPR 14">
    <location>
        <begin position="523"/>
        <end position="557"/>
    </location>
</feature>
<feature type="repeat" description="PPR 15">
    <location>
        <begin position="558"/>
        <end position="588"/>
    </location>
</feature>
<feature type="repeat" description="PPR 16">
    <location>
        <begin position="589"/>
        <end position="623"/>
    </location>
</feature>
<feature type="repeat" description="PPR 17">
    <location>
        <begin position="624"/>
        <end position="659"/>
    </location>
</feature>
<feature type="repeat" description="PPR 18">
    <location>
        <begin position="660"/>
        <end position="694"/>
    </location>
</feature>
<feature type="region of interest" description="Type E motif">
    <location>
        <begin position="695"/>
        <end position="770"/>
    </location>
</feature>
<feature type="region of interest" description="Type E(+) motif">
    <location>
        <begin position="771"/>
        <end position="801"/>
    </location>
</feature>
<feature type="region of interest" description="Type DYW motif">
    <location>
        <begin position="803"/>
        <end position="894"/>
    </location>
</feature>
<feature type="sequence conflict" description="In Ref. 4; CAA06829." evidence="1" ref="4">
    <original>T</original>
    <variation>P</variation>
    <location>
        <position position="489"/>
    </location>
</feature>
<proteinExistence type="evidence at transcript level"/>